<sequence length="462" mass="52569">MTKNHKLWGGRFESSLEKWVEEFGASISFDQKLAPYDMKASMAHVTMLGKTDIISQEEAGLIKDGLKILQDKYRAGQLTFSISNEDIHMNIESLLTAEIGEVAGKLHTARSRNDQVATDMHLYLKDKLQEMMKKLLHLRITLVNLAENHIYTVMPGYTHLQHAQPISFGHHLMAYYNMFTRDTERLEFNMKHTNLSPLGAAALAGTTFPIDRHMTTRLLDFEKPYSNSLDAVSDRDFIIEFLSNASILMMHLSRFCEEIINWCSYEYQFITLSDTFSTGSSIMPQKKNPDMAELIRGKTGRVYGNLFSLLTVMKSLPLAYNKDLQEDKEGMFDSVETVSIAIEIMANMLETMTVNEHIMMTSTETDFSNATELADYLASKGIPFRKAHEIVGKLVLECSKNGSYLQDIPLKYYQEISELIENDIYEILTAKTAVKRRNSLGGTGFDQVKKQILLARKELKAE</sequence>
<proteinExistence type="inferred from homology"/>
<comment type="catalytic activity">
    <reaction evidence="1">
        <text>2-(N(omega)-L-arginino)succinate = fumarate + L-arginine</text>
        <dbReference type="Rhea" id="RHEA:24020"/>
        <dbReference type="ChEBI" id="CHEBI:29806"/>
        <dbReference type="ChEBI" id="CHEBI:32682"/>
        <dbReference type="ChEBI" id="CHEBI:57472"/>
        <dbReference type="EC" id="4.3.2.1"/>
    </reaction>
</comment>
<comment type="pathway">
    <text evidence="1">Amino-acid biosynthesis; L-arginine biosynthesis; L-arginine from L-ornithine and carbamoyl phosphate: step 3/3.</text>
</comment>
<comment type="subcellular location">
    <subcellularLocation>
        <location evidence="1">Cytoplasm</location>
    </subcellularLocation>
</comment>
<comment type="similarity">
    <text evidence="1">Belongs to the lyase 1 family. Argininosuccinate lyase subfamily.</text>
</comment>
<gene>
    <name evidence="1" type="primary">argH</name>
    <name type="ordered locus">SAK_0177</name>
</gene>
<dbReference type="EC" id="4.3.2.1" evidence="1"/>
<dbReference type="EMBL" id="CP000114">
    <property type="protein sequence ID" value="ABA45212.1"/>
    <property type="molecule type" value="Genomic_DNA"/>
</dbReference>
<dbReference type="RefSeq" id="WP_000164574.1">
    <property type="nucleotide sequence ID" value="NC_007432.1"/>
</dbReference>
<dbReference type="SMR" id="Q3K3Q3"/>
<dbReference type="KEGG" id="sak:SAK_0177"/>
<dbReference type="HOGENOM" id="CLU_027272_2_3_9"/>
<dbReference type="UniPathway" id="UPA00068">
    <property type="reaction ID" value="UER00114"/>
</dbReference>
<dbReference type="GO" id="GO:0005829">
    <property type="term" value="C:cytosol"/>
    <property type="evidence" value="ECO:0007669"/>
    <property type="project" value="TreeGrafter"/>
</dbReference>
<dbReference type="GO" id="GO:0004056">
    <property type="term" value="F:argininosuccinate lyase activity"/>
    <property type="evidence" value="ECO:0007669"/>
    <property type="project" value="UniProtKB-UniRule"/>
</dbReference>
<dbReference type="GO" id="GO:0042450">
    <property type="term" value="P:arginine biosynthetic process via ornithine"/>
    <property type="evidence" value="ECO:0007669"/>
    <property type="project" value="InterPro"/>
</dbReference>
<dbReference type="GO" id="GO:0006526">
    <property type="term" value="P:L-arginine biosynthetic process"/>
    <property type="evidence" value="ECO:0007669"/>
    <property type="project" value="UniProtKB-UniRule"/>
</dbReference>
<dbReference type="CDD" id="cd01359">
    <property type="entry name" value="Argininosuccinate_lyase"/>
    <property type="match status" value="1"/>
</dbReference>
<dbReference type="FunFam" id="1.10.275.10:FF:000002">
    <property type="entry name" value="Argininosuccinate lyase"/>
    <property type="match status" value="1"/>
</dbReference>
<dbReference type="FunFam" id="1.10.40.30:FF:000001">
    <property type="entry name" value="Argininosuccinate lyase"/>
    <property type="match status" value="1"/>
</dbReference>
<dbReference type="FunFam" id="1.20.200.10:FF:000002">
    <property type="entry name" value="Argininosuccinate lyase"/>
    <property type="match status" value="1"/>
</dbReference>
<dbReference type="Gene3D" id="1.10.40.30">
    <property type="entry name" value="Fumarase/aspartase (C-terminal domain)"/>
    <property type="match status" value="1"/>
</dbReference>
<dbReference type="Gene3D" id="1.20.200.10">
    <property type="entry name" value="Fumarase/aspartase (Central domain)"/>
    <property type="match status" value="1"/>
</dbReference>
<dbReference type="Gene3D" id="1.10.275.10">
    <property type="entry name" value="Fumarase/aspartase (N-terminal domain)"/>
    <property type="match status" value="1"/>
</dbReference>
<dbReference type="HAMAP" id="MF_00006">
    <property type="entry name" value="Arg_succ_lyase"/>
    <property type="match status" value="1"/>
</dbReference>
<dbReference type="InterPro" id="IPR029419">
    <property type="entry name" value="Arg_succ_lyase_C"/>
</dbReference>
<dbReference type="InterPro" id="IPR009049">
    <property type="entry name" value="Argininosuccinate_lyase"/>
</dbReference>
<dbReference type="InterPro" id="IPR024083">
    <property type="entry name" value="Fumarase/histidase_N"/>
</dbReference>
<dbReference type="InterPro" id="IPR020557">
    <property type="entry name" value="Fumarate_lyase_CS"/>
</dbReference>
<dbReference type="InterPro" id="IPR000362">
    <property type="entry name" value="Fumarate_lyase_fam"/>
</dbReference>
<dbReference type="InterPro" id="IPR022761">
    <property type="entry name" value="Fumarate_lyase_N"/>
</dbReference>
<dbReference type="InterPro" id="IPR008948">
    <property type="entry name" value="L-Aspartase-like"/>
</dbReference>
<dbReference type="NCBIfam" id="TIGR00838">
    <property type="entry name" value="argH"/>
    <property type="match status" value="1"/>
</dbReference>
<dbReference type="PANTHER" id="PTHR43814">
    <property type="entry name" value="ARGININOSUCCINATE LYASE"/>
    <property type="match status" value="1"/>
</dbReference>
<dbReference type="PANTHER" id="PTHR43814:SF1">
    <property type="entry name" value="ARGININOSUCCINATE LYASE"/>
    <property type="match status" value="1"/>
</dbReference>
<dbReference type="Pfam" id="PF14698">
    <property type="entry name" value="ASL_C2"/>
    <property type="match status" value="1"/>
</dbReference>
<dbReference type="Pfam" id="PF00206">
    <property type="entry name" value="Lyase_1"/>
    <property type="match status" value="1"/>
</dbReference>
<dbReference type="PRINTS" id="PR00145">
    <property type="entry name" value="ARGSUCLYASE"/>
</dbReference>
<dbReference type="PRINTS" id="PR00149">
    <property type="entry name" value="FUMRATELYASE"/>
</dbReference>
<dbReference type="SUPFAM" id="SSF48557">
    <property type="entry name" value="L-aspartase-like"/>
    <property type="match status" value="1"/>
</dbReference>
<dbReference type="PROSITE" id="PS00163">
    <property type="entry name" value="FUMARATE_LYASES"/>
    <property type="match status" value="1"/>
</dbReference>
<protein>
    <recommendedName>
        <fullName evidence="1">Argininosuccinate lyase</fullName>
        <shortName evidence="1">ASAL</shortName>
        <ecNumber evidence="1">4.3.2.1</ecNumber>
    </recommendedName>
    <alternativeName>
        <fullName evidence="1">Arginosuccinase</fullName>
    </alternativeName>
</protein>
<name>ARLY_STRA1</name>
<feature type="chain" id="PRO_0000240777" description="Argininosuccinate lyase">
    <location>
        <begin position="1"/>
        <end position="462"/>
    </location>
</feature>
<accession>Q3K3Q3</accession>
<keyword id="KW-0028">Amino-acid biosynthesis</keyword>
<keyword id="KW-0055">Arginine biosynthesis</keyword>
<keyword id="KW-0963">Cytoplasm</keyword>
<keyword id="KW-0456">Lyase</keyword>
<evidence type="ECO:0000255" key="1">
    <source>
        <dbReference type="HAMAP-Rule" id="MF_00006"/>
    </source>
</evidence>
<reference key="1">
    <citation type="journal article" date="2005" name="Proc. Natl. Acad. Sci. U.S.A.">
        <title>Genome analysis of multiple pathogenic isolates of Streptococcus agalactiae: implications for the microbial 'pan-genome'.</title>
        <authorList>
            <person name="Tettelin H."/>
            <person name="Masignani V."/>
            <person name="Cieslewicz M.J."/>
            <person name="Donati C."/>
            <person name="Medini D."/>
            <person name="Ward N.L."/>
            <person name="Angiuoli S.V."/>
            <person name="Crabtree J."/>
            <person name="Jones A.L."/>
            <person name="Durkin A.S."/>
            <person name="DeBoy R.T."/>
            <person name="Davidsen T.M."/>
            <person name="Mora M."/>
            <person name="Scarselli M."/>
            <person name="Margarit y Ros I."/>
            <person name="Peterson J.D."/>
            <person name="Hauser C.R."/>
            <person name="Sundaram J.P."/>
            <person name="Nelson W.C."/>
            <person name="Madupu R."/>
            <person name="Brinkac L.M."/>
            <person name="Dodson R.J."/>
            <person name="Rosovitz M.J."/>
            <person name="Sullivan S.A."/>
            <person name="Daugherty S.C."/>
            <person name="Haft D.H."/>
            <person name="Selengut J."/>
            <person name="Gwinn M.L."/>
            <person name="Zhou L."/>
            <person name="Zafar N."/>
            <person name="Khouri H."/>
            <person name="Radune D."/>
            <person name="Dimitrov G."/>
            <person name="Watkins K."/>
            <person name="O'Connor K.J."/>
            <person name="Smith S."/>
            <person name="Utterback T.R."/>
            <person name="White O."/>
            <person name="Rubens C.E."/>
            <person name="Grandi G."/>
            <person name="Madoff L.C."/>
            <person name="Kasper D.L."/>
            <person name="Telford J.L."/>
            <person name="Wessels M.R."/>
            <person name="Rappuoli R."/>
            <person name="Fraser C.M."/>
        </authorList>
    </citation>
    <scope>NUCLEOTIDE SEQUENCE [LARGE SCALE GENOMIC DNA]</scope>
    <source>
        <strain>ATCC 27591 / A909 / CDC SS700</strain>
    </source>
</reference>
<organism>
    <name type="scientific">Streptococcus agalactiae serotype Ia (strain ATCC 27591 / A909 / CDC SS700)</name>
    <dbReference type="NCBI Taxonomy" id="205921"/>
    <lineage>
        <taxon>Bacteria</taxon>
        <taxon>Bacillati</taxon>
        <taxon>Bacillota</taxon>
        <taxon>Bacilli</taxon>
        <taxon>Lactobacillales</taxon>
        <taxon>Streptococcaceae</taxon>
        <taxon>Streptococcus</taxon>
    </lineage>
</organism>